<proteinExistence type="inferred from homology"/>
<protein>
    <recommendedName>
        <fullName evidence="1">Capsid protein</fullName>
    </recommendedName>
    <alternativeName>
        <fullName evidence="1">Core antigen</fullName>
    </alternativeName>
    <alternativeName>
        <fullName evidence="1">Core protein</fullName>
    </alternativeName>
    <alternativeName>
        <fullName evidence="1">HBcAg</fullName>
    </alternativeName>
    <alternativeName>
        <fullName evidence="1">p21.5</fullName>
    </alternativeName>
</protein>
<comment type="function">
    <text evidence="1">Self assembles to form an icosahedral capsid. Most capsids appear to be large particles with an icosahedral symmetry of T=4 and consist of 240 copies of capsid protein, though a fraction forms smaller T=3 particles consisting of 180 capsid proteins. Entering capsids are transported along microtubules to the nucleus. Phosphorylation of the capsid is thought to induce exposure of nuclear localization signal in the C-terminal portion of the capsid protein that allows binding to the nuclear pore complex via the importin (karyopherin-) alpha and beta. Capsids are imported in intact form through the nuclear pore into the nuclear basket, where it probably binds NUP153. Only capsids that contain the mature viral genome can release the viral DNA and capsid protein into the nucleoplasm. Immature capsids get stuck in the basket. Capsids encapsulate the pre-genomic RNA and the P protein. Pre-genomic RNA is reverse-transcribed into DNA while the capsid is still in the cytoplasm. The capsid can then either be directed to the nucleus, providing more genomes for transcription, or bud through the endoplasmic reticulum to provide new virions.</text>
</comment>
<comment type="subunit">
    <text evidence="1">Homodimerizes, then multimerizes. Interacts with cytosol exposed regions of viral L glycoprotein present in the reticulum-to-Golgi compartment. Interacts with human FLNB. Phosphorylated form interacts with host importin alpha; this interaction depends on the exposure of the NLS, which itself depends upon genome maturation and/or phosphorylation of the capsid protein. Interacts with host NUP153.</text>
</comment>
<comment type="subcellular location">
    <subcellularLocation>
        <location evidence="1">Virion</location>
    </subcellularLocation>
    <subcellularLocation>
        <location evidence="1">Host cytoplasm</location>
    </subcellularLocation>
</comment>
<comment type="alternative products">
    <event type="alternative initiation"/>
    <isoform>
        <id>P24023-1</id>
        <name>Capsid protein</name>
        <sequence type="displayed"/>
    </isoform>
    <isoform>
        <id>P0C6H9-1</id>
        <name>External core antigen</name>
        <sequence type="external"/>
    </isoform>
</comment>
<comment type="PTM">
    <text evidence="1">Phosphorylated by host SRPK1, SRPK2, and maybe protein kinase C or GAPDH. Phosphorylation is critical for pregenomic RNA packaging. Protein kinase C phosphorylation is stimulated by HBx protein and may play a role in transport of the viral genome to the nucleus at the late step during the viral replication cycle.</text>
</comment>
<comment type="similarity">
    <text evidence="1">Belongs to the orthohepadnavirus core antigen family.</text>
</comment>
<keyword id="KW-0024">Alternative initiation</keyword>
<keyword id="KW-0167">Capsid protein</keyword>
<keyword id="KW-1176">Cytoplasmic inwards viral transport</keyword>
<keyword id="KW-0238">DNA-binding</keyword>
<keyword id="KW-1035">Host cytoplasm</keyword>
<keyword id="KW-0945">Host-virus interaction</keyword>
<keyword id="KW-1177">Microtubular inwards viral transport</keyword>
<keyword id="KW-0597">Phosphoprotein</keyword>
<keyword id="KW-0677">Repeat</keyword>
<keyword id="KW-0694">RNA-binding</keyword>
<keyword id="KW-1144">T=4 icosahedral capsid protein</keyword>
<keyword id="KW-1163">Viral penetration into host nucleus</keyword>
<keyword id="KW-0946">Virion</keyword>
<keyword id="KW-1160">Virus entry into host cell</keyword>
<organism>
    <name type="scientific">Hepatitis B virus genotype D (isolate France/alpha1/1989)</name>
    <name type="common">HBV-D</name>
    <dbReference type="NCBI Taxonomy" id="10411"/>
    <lineage>
        <taxon>Viruses</taxon>
        <taxon>Riboviria</taxon>
        <taxon>Pararnavirae</taxon>
        <taxon>Artverviricota</taxon>
        <taxon>Revtraviricetes</taxon>
        <taxon>Blubervirales</taxon>
        <taxon>Hepadnaviridae</taxon>
        <taxon>Orthohepadnavirus</taxon>
        <taxon>Hepatitis B virus</taxon>
    </lineage>
</organism>
<feature type="chain" id="PRO_0000222313" description="Capsid protein">
    <location>
        <begin position="1"/>
        <end position="183"/>
    </location>
</feature>
<feature type="repeat" description="1; half-length">
    <location>
        <begin position="155"/>
        <end position="161"/>
    </location>
</feature>
<feature type="repeat" description="2">
    <location>
        <begin position="162"/>
        <end position="169"/>
    </location>
</feature>
<feature type="repeat" description="3">
    <location>
        <begin position="170"/>
        <end position="177"/>
    </location>
</feature>
<feature type="region of interest" description="Disordered" evidence="2">
    <location>
        <begin position="136"/>
        <end position="183"/>
    </location>
</feature>
<feature type="region of interest" description="3 X 8 AA repeats of S-P-R-R-R-[PR]-[ST]-Q">
    <location>
        <begin position="155"/>
        <end position="177"/>
    </location>
</feature>
<feature type="region of interest" description="RNA binding" evidence="1">
    <location>
        <begin position="177"/>
        <end position="183"/>
    </location>
</feature>
<feature type="short sequence motif" description="Bipartite nuclear localization signal" evidence="1">
    <location>
        <begin position="158"/>
        <end position="175"/>
    </location>
</feature>
<feature type="compositionally biased region" description="Basic residues" evidence="2">
    <location>
        <begin position="149"/>
        <end position="176"/>
    </location>
</feature>
<feature type="modified residue" description="Phosphoserine; by host" evidence="1">
    <location>
        <position position="155"/>
    </location>
</feature>
<feature type="modified residue" description="Phosphoserine; by host" evidence="1">
    <location>
        <position position="162"/>
    </location>
</feature>
<feature type="modified residue" description="Phosphoserine; by host" evidence="1">
    <location>
        <position position="170"/>
    </location>
</feature>
<accession>P24023</accession>
<reference key="1">
    <citation type="journal article" date="1990" name="Virology">
        <title>Active hepatitis B virus replication in the presence of anti-HBe is associated with viral variants containing an inactive pre-C region.</title>
        <authorList>
            <person name="Tong S."/>
            <person name="Li J."/>
            <person name="Vitvitski L."/>
            <person name="Trepo C."/>
        </authorList>
    </citation>
    <scope>NUCLEOTIDE SEQUENCE [GENOMIC DNA]</scope>
</reference>
<dbReference type="EMBL" id="M32138">
    <property type="status" value="NOT_ANNOTATED_CDS"/>
    <property type="molecule type" value="Genomic_DNA"/>
</dbReference>
<dbReference type="PIR" id="A34773">
    <property type="entry name" value="NKVLA1"/>
</dbReference>
<dbReference type="SMR" id="P24023"/>
<dbReference type="Proteomes" id="UP000007929">
    <property type="component" value="Segment"/>
</dbReference>
<dbReference type="GO" id="GO:0043657">
    <property type="term" value="C:host cell"/>
    <property type="evidence" value="ECO:0007669"/>
    <property type="project" value="GOC"/>
</dbReference>
<dbReference type="GO" id="GO:0030430">
    <property type="term" value="C:host cell cytoplasm"/>
    <property type="evidence" value="ECO:0007669"/>
    <property type="project" value="UniProtKB-SubCell"/>
</dbReference>
<dbReference type="GO" id="GO:0039619">
    <property type="term" value="C:T=4 icosahedral viral capsid"/>
    <property type="evidence" value="ECO:0007669"/>
    <property type="project" value="UniProtKB-UniRule"/>
</dbReference>
<dbReference type="GO" id="GO:0003677">
    <property type="term" value="F:DNA binding"/>
    <property type="evidence" value="ECO:0007669"/>
    <property type="project" value="UniProtKB-UniRule"/>
</dbReference>
<dbReference type="GO" id="GO:0003723">
    <property type="term" value="F:RNA binding"/>
    <property type="evidence" value="ECO:0007669"/>
    <property type="project" value="UniProtKB-UniRule"/>
</dbReference>
<dbReference type="GO" id="GO:0005198">
    <property type="term" value="F:structural molecule activity"/>
    <property type="evidence" value="ECO:0007669"/>
    <property type="project" value="UniProtKB-UniRule"/>
</dbReference>
<dbReference type="GO" id="GO:0075521">
    <property type="term" value="P:microtubule-dependent intracellular transport of viral material towards nucleus"/>
    <property type="evidence" value="ECO:0007669"/>
    <property type="project" value="UniProtKB-UniRule"/>
</dbReference>
<dbReference type="GO" id="GO:0046718">
    <property type="term" value="P:symbiont entry into host cell"/>
    <property type="evidence" value="ECO:0007669"/>
    <property type="project" value="UniProtKB-UniRule"/>
</dbReference>
<dbReference type="GO" id="GO:0075732">
    <property type="term" value="P:viral penetration into host nucleus"/>
    <property type="evidence" value="ECO:0007669"/>
    <property type="project" value="UniProtKB-UniRule"/>
</dbReference>
<dbReference type="FunFam" id="1.10.4090.10:FF:000001">
    <property type="entry name" value="Capsid protein"/>
    <property type="match status" value="1"/>
</dbReference>
<dbReference type="Gene3D" id="1.10.4090.10">
    <property type="entry name" value="Viral capsid, core domain supefamily, Hepatitis B virus"/>
    <property type="match status" value="1"/>
</dbReference>
<dbReference type="HAMAP" id="MF_04076">
    <property type="entry name" value="HBV_HBEAG"/>
    <property type="match status" value="1"/>
</dbReference>
<dbReference type="InterPro" id="IPR002006">
    <property type="entry name" value="Hepatitis_core"/>
</dbReference>
<dbReference type="InterPro" id="IPR036459">
    <property type="entry name" value="Viral_capsid_core_dom_sf_HBV"/>
</dbReference>
<dbReference type="Pfam" id="PF00906">
    <property type="entry name" value="Hepatitis_core"/>
    <property type="match status" value="3"/>
</dbReference>
<dbReference type="SUPFAM" id="SSF47852">
    <property type="entry name" value="Hepatitis B viral capsid (hbcag)"/>
    <property type="match status" value="1"/>
</dbReference>
<sequence length="183" mass="21102">MDIDPYKEFGATVELLSFLPSDFFPSVRDLLDTASALYREALESPEHCSPHHTALRQAILCWGDLITLSTWVGGNLEDPTSRDLVVSYVNTNMGLKFRQLLWFHISCLTFGRETVIEYLVSFGVWIRTPPAYRPPNAPILSTLPETTVVRRRGRSPRRRTPSPRRRRSQSPRRRRTQSRESQC</sequence>
<name>CAPSD_HBVD2</name>
<evidence type="ECO:0000255" key="1">
    <source>
        <dbReference type="HAMAP-Rule" id="MF_04076"/>
    </source>
</evidence>
<evidence type="ECO:0000256" key="2">
    <source>
        <dbReference type="SAM" id="MobiDB-lite"/>
    </source>
</evidence>
<gene>
    <name evidence="1" type="primary">C</name>
</gene>
<organismHost>
    <name type="scientific">Homo sapiens</name>
    <name type="common">Human</name>
    <dbReference type="NCBI Taxonomy" id="9606"/>
</organismHost>
<organismHost>
    <name type="scientific">Pan troglodytes</name>
    <name type="common">Chimpanzee</name>
    <dbReference type="NCBI Taxonomy" id="9598"/>
</organismHost>